<evidence type="ECO:0000255" key="1">
    <source>
        <dbReference type="HAMAP-Rule" id="MF_00690"/>
    </source>
</evidence>
<protein>
    <recommendedName>
        <fullName evidence="1">UPF0270 protein YPN_3888</fullName>
    </recommendedName>
</protein>
<reference key="1">
    <citation type="journal article" date="2006" name="J. Bacteriol.">
        <title>Complete genome sequence of Yersinia pestis strains Antiqua and Nepal516: evidence of gene reduction in an emerging pathogen.</title>
        <authorList>
            <person name="Chain P.S.G."/>
            <person name="Hu P."/>
            <person name="Malfatti S.A."/>
            <person name="Radnedge L."/>
            <person name="Larimer F."/>
            <person name="Vergez L.M."/>
            <person name="Worsham P."/>
            <person name="Chu M.C."/>
            <person name="Andersen G.L."/>
        </authorList>
    </citation>
    <scope>NUCLEOTIDE SEQUENCE [LARGE SCALE GENOMIC DNA]</scope>
    <source>
        <strain>Nepal516</strain>
    </source>
</reference>
<reference key="2">
    <citation type="submission" date="2009-04" db="EMBL/GenBank/DDBJ databases">
        <title>Yersinia pestis Nepal516A whole genome shotgun sequencing project.</title>
        <authorList>
            <person name="Plunkett G. III"/>
            <person name="Anderson B.D."/>
            <person name="Baumler D.J."/>
            <person name="Burland V."/>
            <person name="Cabot E.L."/>
            <person name="Glasner J.D."/>
            <person name="Mau B."/>
            <person name="Neeno-Eckwall E."/>
            <person name="Perna N.T."/>
            <person name="Munk A.C."/>
            <person name="Tapia R."/>
            <person name="Green L.D."/>
            <person name="Rogers Y.C."/>
            <person name="Detter J.C."/>
            <person name="Bruce D.C."/>
            <person name="Brettin T.S."/>
        </authorList>
    </citation>
    <scope>NUCLEOTIDE SEQUENCE [LARGE SCALE GENOMIC DNA]</scope>
    <source>
        <strain>Nepal516</strain>
    </source>
</reference>
<accession>Q1CCR5</accession>
<accession>D1Q2Q2</accession>
<proteinExistence type="inferred from homology"/>
<name>Y3888_YERPN</name>
<organism>
    <name type="scientific">Yersinia pestis bv. Antiqua (strain Nepal516)</name>
    <dbReference type="NCBI Taxonomy" id="377628"/>
    <lineage>
        <taxon>Bacteria</taxon>
        <taxon>Pseudomonadati</taxon>
        <taxon>Pseudomonadota</taxon>
        <taxon>Gammaproteobacteria</taxon>
        <taxon>Enterobacterales</taxon>
        <taxon>Yersiniaceae</taxon>
        <taxon>Yersinia</taxon>
    </lineage>
</organism>
<feature type="chain" id="PRO_1000045182" description="UPF0270 protein YPN_3888">
    <location>
        <begin position="1"/>
        <end position="78"/>
    </location>
</feature>
<comment type="similarity">
    <text evidence="1">Belongs to the UPF0270 family.</text>
</comment>
<gene>
    <name type="ordered locus">YPN_3888</name>
    <name type="ORF">YP516_4415</name>
</gene>
<sequence length="78" mass="8926">MIIPWQQVDSETLDNLLEAFVLREGTDYGEHERSLTEKVADVRRQLVSGEAVLVWSELHETINIMPRGSFRAGAEEQQ</sequence>
<dbReference type="EMBL" id="CP000305">
    <property type="protein sequence ID" value="ABG20215.1"/>
    <property type="molecule type" value="Genomic_DNA"/>
</dbReference>
<dbReference type="EMBL" id="ACNQ01000019">
    <property type="protein sequence ID" value="EEO74805.1"/>
    <property type="molecule type" value="Genomic_DNA"/>
</dbReference>
<dbReference type="RefSeq" id="WP_002212301.1">
    <property type="nucleotide sequence ID" value="NZ_ACNQ01000019.1"/>
</dbReference>
<dbReference type="SMR" id="Q1CCR5"/>
<dbReference type="KEGG" id="ypn:YPN_3888"/>
<dbReference type="HOGENOM" id="CLU_186759_1_0_6"/>
<dbReference type="Proteomes" id="UP000008936">
    <property type="component" value="Chromosome"/>
</dbReference>
<dbReference type="Gene3D" id="1.10.10.610">
    <property type="entry name" value="YehU-like"/>
    <property type="match status" value="1"/>
</dbReference>
<dbReference type="HAMAP" id="MF_00690">
    <property type="entry name" value="UPF0270"/>
    <property type="match status" value="1"/>
</dbReference>
<dbReference type="InterPro" id="IPR010648">
    <property type="entry name" value="UPF0270"/>
</dbReference>
<dbReference type="InterPro" id="IPR036685">
    <property type="entry name" value="YehU-like_sf"/>
</dbReference>
<dbReference type="NCBIfam" id="NF003438">
    <property type="entry name" value="PRK04966.1"/>
    <property type="match status" value="1"/>
</dbReference>
<dbReference type="Pfam" id="PF06794">
    <property type="entry name" value="UPF0270"/>
    <property type="match status" value="1"/>
</dbReference>
<dbReference type="PIRSF" id="PIRSF006169">
    <property type="entry name" value="UCP006169"/>
    <property type="match status" value="1"/>
</dbReference>
<dbReference type="SUPFAM" id="SSF118001">
    <property type="entry name" value="YehU-like"/>
    <property type="match status" value="1"/>
</dbReference>